<reference key="1">
    <citation type="journal article" date="2007" name="Science">
        <title>Legumes symbioses: absence of nod genes in photosynthetic bradyrhizobia.</title>
        <authorList>
            <person name="Giraud E."/>
            <person name="Moulin L."/>
            <person name="Vallenet D."/>
            <person name="Barbe V."/>
            <person name="Cytryn E."/>
            <person name="Avarre J.-C."/>
            <person name="Jaubert M."/>
            <person name="Simon D."/>
            <person name="Cartieaux F."/>
            <person name="Prin Y."/>
            <person name="Bena G."/>
            <person name="Hannibal L."/>
            <person name="Fardoux J."/>
            <person name="Kojadinovic M."/>
            <person name="Vuillet L."/>
            <person name="Lajus A."/>
            <person name="Cruveiller S."/>
            <person name="Rouy Z."/>
            <person name="Mangenot S."/>
            <person name="Segurens B."/>
            <person name="Dossat C."/>
            <person name="Franck W.L."/>
            <person name="Chang W.-S."/>
            <person name="Saunders E."/>
            <person name="Bruce D."/>
            <person name="Richardson P."/>
            <person name="Normand P."/>
            <person name="Dreyfus B."/>
            <person name="Pignol D."/>
            <person name="Stacey G."/>
            <person name="Emerich D."/>
            <person name="Vermeglio A."/>
            <person name="Medigue C."/>
            <person name="Sadowsky M."/>
        </authorList>
    </citation>
    <scope>NUCLEOTIDE SEQUENCE [LARGE SCALE GENOMIC DNA]</scope>
    <source>
        <strain>BTAi1 / ATCC BAA-1182</strain>
    </source>
</reference>
<dbReference type="EC" id="2.1.1.163" evidence="1"/>
<dbReference type="EC" id="2.1.1.201" evidence="1"/>
<dbReference type="EMBL" id="CP000494">
    <property type="protein sequence ID" value="ABQ32382.1"/>
    <property type="molecule type" value="Genomic_DNA"/>
</dbReference>
<dbReference type="RefSeq" id="WP_011942605.1">
    <property type="nucleotide sequence ID" value="NC_009485.1"/>
</dbReference>
<dbReference type="SMR" id="A5E888"/>
<dbReference type="STRING" id="288000.BBta_0081"/>
<dbReference type="KEGG" id="bbt:BBta_0081"/>
<dbReference type="eggNOG" id="COG2226">
    <property type="taxonomic scope" value="Bacteria"/>
</dbReference>
<dbReference type="HOGENOM" id="CLU_037990_0_1_5"/>
<dbReference type="OrthoDB" id="9808140at2"/>
<dbReference type="UniPathway" id="UPA00079">
    <property type="reaction ID" value="UER00169"/>
</dbReference>
<dbReference type="UniPathway" id="UPA00232"/>
<dbReference type="Proteomes" id="UP000000246">
    <property type="component" value="Chromosome"/>
</dbReference>
<dbReference type="GO" id="GO:0008425">
    <property type="term" value="F:2-methoxy-6-polyprenyl-1,4-benzoquinol methyltransferase activity"/>
    <property type="evidence" value="ECO:0007669"/>
    <property type="project" value="UniProtKB-UniRule"/>
</dbReference>
<dbReference type="GO" id="GO:0043770">
    <property type="term" value="F:demethylmenaquinone methyltransferase activity"/>
    <property type="evidence" value="ECO:0007669"/>
    <property type="project" value="UniProtKB-UniRule"/>
</dbReference>
<dbReference type="GO" id="GO:0009060">
    <property type="term" value="P:aerobic respiration"/>
    <property type="evidence" value="ECO:0007669"/>
    <property type="project" value="UniProtKB-UniRule"/>
</dbReference>
<dbReference type="GO" id="GO:0009234">
    <property type="term" value="P:menaquinone biosynthetic process"/>
    <property type="evidence" value="ECO:0007669"/>
    <property type="project" value="UniProtKB-UniRule"/>
</dbReference>
<dbReference type="GO" id="GO:0032259">
    <property type="term" value="P:methylation"/>
    <property type="evidence" value="ECO:0007669"/>
    <property type="project" value="UniProtKB-KW"/>
</dbReference>
<dbReference type="CDD" id="cd02440">
    <property type="entry name" value="AdoMet_MTases"/>
    <property type="match status" value="1"/>
</dbReference>
<dbReference type="Gene3D" id="3.40.50.150">
    <property type="entry name" value="Vaccinia Virus protein VP39"/>
    <property type="match status" value="1"/>
</dbReference>
<dbReference type="HAMAP" id="MF_01813">
    <property type="entry name" value="MenG_UbiE_methyltr"/>
    <property type="match status" value="1"/>
</dbReference>
<dbReference type="InterPro" id="IPR029063">
    <property type="entry name" value="SAM-dependent_MTases_sf"/>
</dbReference>
<dbReference type="InterPro" id="IPR004033">
    <property type="entry name" value="UbiE/COQ5_MeTrFase"/>
</dbReference>
<dbReference type="InterPro" id="IPR023576">
    <property type="entry name" value="UbiE/COQ5_MeTrFase_CS"/>
</dbReference>
<dbReference type="NCBIfam" id="TIGR01934">
    <property type="entry name" value="MenG_MenH_UbiE"/>
    <property type="match status" value="1"/>
</dbReference>
<dbReference type="NCBIfam" id="NF001242">
    <property type="entry name" value="PRK00216.1-3"/>
    <property type="match status" value="1"/>
</dbReference>
<dbReference type="PANTHER" id="PTHR43591:SF24">
    <property type="entry name" value="2-METHOXY-6-POLYPRENYL-1,4-BENZOQUINOL METHYLASE, MITOCHONDRIAL"/>
    <property type="match status" value="1"/>
</dbReference>
<dbReference type="PANTHER" id="PTHR43591">
    <property type="entry name" value="METHYLTRANSFERASE"/>
    <property type="match status" value="1"/>
</dbReference>
<dbReference type="Pfam" id="PF01209">
    <property type="entry name" value="Ubie_methyltran"/>
    <property type="match status" value="1"/>
</dbReference>
<dbReference type="SUPFAM" id="SSF53335">
    <property type="entry name" value="S-adenosyl-L-methionine-dependent methyltransferases"/>
    <property type="match status" value="1"/>
</dbReference>
<dbReference type="PROSITE" id="PS51608">
    <property type="entry name" value="SAM_MT_UBIE"/>
    <property type="match status" value="1"/>
</dbReference>
<dbReference type="PROSITE" id="PS01183">
    <property type="entry name" value="UBIE_1"/>
    <property type="match status" value="1"/>
</dbReference>
<name>UBIE_BRASB</name>
<proteinExistence type="inferred from homology"/>
<protein>
    <recommendedName>
        <fullName evidence="1">Ubiquinone/menaquinone biosynthesis C-methyltransferase UbiE</fullName>
        <ecNumber evidence="1">2.1.1.163</ecNumber>
        <ecNumber evidence="1">2.1.1.201</ecNumber>
    </recommendedName>
    <alternativeName>
        <fullName evidence="1">2-methoxy-6-polyprenyl-1,4-benzoquinol methylase</fullName>
    </alternativeName>
    <alternativeName>
        <fullName evidence="1">Demethylmenaquinone methyltransferase</fullName>
    </alternativeName>
</protein>
<evidence type="ECO:0000255" key="1">
    <source>
        <dbReference type="HAMAP-Rule" id="MF_01813"/>
    </source>
</evidence>
<feature type="chain" id="PRO_1000056223" description="Ubiquinone/menaquinone biosynthesis C-methyltransferase UbiE">
    <location>
        <begin position="1"/>
        <end position="253"/>
    </location>
</feature>
<feature type="binding site" evidence="1">
    <location>
        <position position="76"/>
    </location>
    <ligand>
        <name>S-adenosyl-L-methionine</name>
        <dbReference type="ChEBI" id="CHEBI:59789"/>
    </ligand>
</feature>
<feature type="binding site" evidence="1">
    <location>
        <position position="97"/>
    </location>
    <ligand>
        <name>S-adenosyl-L-methionine</name>
        <dbReference type="ChEBI" id="CHEBI:59789"/>
    </ligand>
</feature>
<feature type="binding site" evidence="1">
    <location>
        <begin position="125"/>
        <end position="126"/>
    </location>
    <ligand>
        <name>S-adenosyl-L-methionine</name>
        <dbReference type="ChEBI" id="CHEBI:59789"/>
    </ligand>
</feature>
<sequence length="253" mass="28097">MDQTDQTTHFGFRDVPLGEKQTLVNDVFHSVAQRYDLMNDLMSAGLHRVWKDIMINTLNPPKSDAPFALLDVAGGTGDISFRAARKAGAGFHATVCDINGDMLEVGRQRALKQYLEDKVSFVEGNAEKLAFPDRSFDAYTIAFGIRNVPQIELALAEAYRVLKHGGRFLCLEFSTVEVPGLDKLYDLFSFNVIPQLGRAVTGDAESYRYLVESIRQFPRPNAFAEMISAAGFSRVSWQTLSGGIVALHSGWRL</sequence>
<keyword id="KW-0474">Menaquinone biosynthesis</keyword>
<keyword id="KW-0489">Methyltransferase</keyword>
<keyword id="KW-1185">Reference proteome</keyword>
<keyword id="KW-0949">S-adenosyl-L-methionine</keyword>
<keyword id="KW-0808">Transferase</keyword>
<keyword id="KW-0831">Ubiquinone biosynthesis</keyword>
<accession>A5E888</accession>
<organism>
    <name type="scientific">Bradyrhizobium sp. (strain BTAi1 / ATCC BAA-1182)</name>
    <dbReference type="NCBI Taxonomy" id="288000"/>
    <lineage>
        <taxon>Bacteria</taxon>
        <taxon>Pseudomonadati</taxon>
        <taxon>Pseudomonadota</taxon>
        <taxon>Alphaproteobacteria</taxon>
        <taxon>Hyphomicrobiales</taxon>
        <taxon>Nitrobacteraceae</taxon>
        <taxon>Bradyrhizobium</taxon>
    </lineage>
</organism>
<gene>
    <name evidence="1" type="primary">ubiE</name>
    <name type="ordered locus">BBta_0081</name>
</gene>
<comment type="function">
    <text evidence="1">Methyltransferase required for the conversion of demethylmenaquinol (DMKH2) to menaquinol (MKH2) and the conversion of 2-polyprenyl-6-methoxy-1,4-benzoquinol (DDMQH2) to 2-polyprenyl-3-methyl-6-methoxy-1,4-benzoquinol (DMQH2).</text>
</comment>
<comment type="catalytic activity">
    <reaction evidence="1">
        <text>a 2-demethylmenaquinol + S-adenosyl-L-methionine = a menaquinol + S-adenosyl-L-homocysteine + H(+)</text>
        <dbReference type="Rhea" id="RHEA:42640"/>
        <dbReference type="Rhea" id="RHEA-COMP:9539"/>
        <dbReference type="Rhea" id="RHEA-COMP:9563"/>
        <dbReference type="ChEBI" id="CHEBI:15378"/>
        <dbReference type="ChEBI" id="CHEBI:18151"/>
        <dbReference type="ChEBI" id="CHEBI:55437"/>
        <dbReference type="ChEBI" id="CHEBI:57856"/>
        <dbReference type="ChEBI" id="CHEBI:59789"/>
        <dbReference type="EC" id="2.1.1.163"/>
    </reaction>
</comment>
<comment type="catalytic activity">
    <reaction evidence="1">
        <text>a 2-methoxy-6-(all-trans-polyprenyl)benzene-1,4-diol + S-adenosyl-L-methionine = a 5-methoxy-2-methyl-3-(all-trans-polyprenyl)benzene-1,4-diol + S-adenosyl-L-homocysteine + H(+)</text>
        <dbReference type="Rhea" id="RHEA:28286"/>
        <dbReference type="Rhea" id="RHEA-COMP:10858"/>
        <dbReference type="Rhea" id="RHEA-COMP:10859"/>
        <dbReference type="ChEBI" id="CHEBI:15378"/>
        <dbReference type="ChEBI" id="CHEBI:57856"/>
        <dbReference type="ChEBI" id="CHEBI:59789"/>
        <dbReference type="ChEBI" id="CHEBI:84166"/>
        <dbReference type="ChEBI" id="CHEBI:84167"/>
        <dbReference type="EC" id="2.1.1.201"/>
    </reaction>
</comment>
<comment type="pathway">
    <text evidence="1">Quinol/quinone metabolism; menaquinone biosynthesis; menaquinol from 1,4-dihydroxy-2-naphthoate: step 2/2.</text>
</comment>
<comment type="pathway">
    <text evidence="1">Cofactor biosynthesis; ubiquinone biosynthesis.</text>
</comment>
<comment type="similarity">
    <text evidence="1">Belongs to the class I-like SAM-binding methyltransferase superfamily. MenG/UbiE family.</text>
</comment>